<keyword id="KW-1003">Cell membrane</keyword>
<keyword id="KW-0963">Cytoplasm</keyword>
<keyword id="KW-0472">Membrane</keyword>
<keyword id="KW-0496">Mitochondrion</keyword>
<keyword id="KW-1185">Reference proteome</keyword>
<keyword id="KW-0812">Transmembrane</keyword>
<keyword id="KW-1133">Transmembrane helix</keyword>
<dbReference type="EMBL" id="AC009894">
    <property type="status" value="NOT_ANNOTATED_CDS"/>
    <property type="molecule type" value="Genomic_DNA"/>
</dbReference>
<dbReference type="EMBL" id="CP002684">
    <property type="protein sequence ID" value="ANM58233.1"/>
    <property type="molecule type" value="Genomic_DNA"/>
</dbReference>
<dbReference type="RefSeq" id="NP_176002.1">
    <property type="nucleotide sequence ID" value="NM_104484.3"/>
</dbReference>
<dbReference type="iPTMnet" id="A0A178WF56"/>
<dbReference type="PaxDb" id="3702-AT1G56060.1"/>
<dbReference type="EnsemblPlants" id="AT1G56060.2">
    <property type="protein sequence ID" value="AT1G56060.2"/>
    <property type="gene ID" value="AT1G56060"/>
</dbReference>
<dbReference type="GeneID" id="842057"/>
<dbReference type="Gramene" id="AT1G56060.2">
    <property type="protein sequence ID" value="AT1G56060.2"/>
    <property type="gene ID" value="AT1G56060"/>
</dbReference>
<dbReference type="KEGG" id="ath:AT1G56060"/>
<dbReference type="Araport" id="AT1G56060"/>
<dbReference type="TAIR" id="AT1G56060">
    <property type="gene designation" value="ATHCYSTM3"/>
</dbReference>
<dbReference type="eggNOG" id="ENOG502R1RQ">
    <property type="taxonomic scope" value="Eukaryota"/>
</dbReference>
<dbReference type="InParanoid" id="A0A178WF56"/>
<dbReference type="OMA" id="VMMNDSP"/>
<dbReference type="OrthoDB" id="785836at2759"/>
<dbReference type="PRO" id="PR:A0A178WF56"/>
<dbReference type="Proteomes" id="UP000006548">
    <property type="component" value="Chromosome 1"/>
</dbReference>
<dbReference type="ExpressionAtlas" id="A0A178WF56">
    <property type="expression patterns" value="baseline and differential"/>
</dbReference>
<dbReference type="GO" id="GO:0005737">
    <property type="term" value="C:cytoplasm"/>
    <property type="evidence" value="ECO:0000314"/>
    <property type="project" value="UniProtKB"/>
</dbReference>
<dbReference type="GO" id="GO:0005739">
    <property type="term" value="C:mitochondrion"/>
    <property type="evidence" value="ECO:0000314"/>
    <property type="project" value="UniProtKB"/>
</dbReference>
<dbReference type="GO" id="GO:0005886">
    <property type="term" value="C:plasma membrane"/>
    <property type="evidence" value="ECO:0000314"/>
    <property type="project" value="UniProtKB"/>
</dbReference>
<dbReference type="GO" id="GO:1901001">
    <property type="term" value="P:negative regulation of response to salt stress"/>
    <property type="evidence" value="ECO:0000315"/>
    <property type="project" value="UniProtKB"/>
</dbReference>
<dbReference type="GO" id="GO:1903426">
    <property type="term" value="P:regulation of reactive oxygen species biosynthetic process"/>
    <property type="evidence" value="ECO:0000315"/>
    <property type="project" value="UniProtKB"/>
</dbReference>
<dbReference type="GO" id="GO:0009651">
    <property type="term" value="P:response to salt stress"/>
    <property type="evidence" value="ECO:0000270"/>
    <property type="project" value="UniProtKB"/>
</dbReference>
<dbReference type="GO" id="GO:0055078">
    <property type="term" value="P:sodium ion homeostasis"/>
    <property type="evidence" value="ECO:0000315"/>
    <property type="project" value="UniProtKB"/>
</dbReference>
<dbReference type="InterPro" id="IPR028144">
    <property type="entry name" value="CYSTM_dom"/>
</dbReference>
<dbReference type="InterPro" id="IPR044850">
    <property type="entry name" value="WIH1-like"/>
</dbReference>
<dbReference type="PANTHER" id="PTHR31568:SF89">
    <property type="entry name" value="CYSTEINE-RICH TRANSMEMBRANE CYSTM DOMAIN-CONTAINING PROTEIN"/>
    <property type="match status" value="1"/>
</dbReference>
<dbReference type="PANTHER" id="PTHR31568">
    <property type="entry name" value="RCG49325, ISOFORM CRA_A"/>
    <property type="match status" value="1"/>
</dbReference>
<dbReference type="Pfam" id="PF12734">
    <property type="entry name" value="CYSTM"/>
    <property type="match status" value="1"/>
</dbReference>
<organism>
    <name type="scientific">Arabidopsis thaliana</name>
    <name type="common">Mouse-ear cress</name>
    <dbReference type="NCBI Taxonomy" id="3702"/>
    <lineage>
        <taxon>Eukaryota</taxon>
        <taxon>Viridiplantae</taxon>
        <taxon>Streptophyta</taxon>
        <taxon>Embryophyta</taxon>
        <taxon>Tracheophyta</taxon>
        <taxon>Spermatophyta</taxon>
        <taxon>Magnoliopsida</taxon>
        <taxon>eudicotyledons</taxon>
        <taxon>Gunneridae</taxon>
        <taxon>Pentapetalae</taxon>
        <taxon>rosids</taxon>
        <taxon>malvids</taxon>
        <taxon>Brassicales</taxon>
        <taxon>Brassicaceae</taxon>
        <taxon>Camelineae</taxon>
        <taxon>Arabidopsis</taxon>
    </lineage>
</organism>
<evidence type="ECO:0000255" key="1"/>
<evidence type="ECO:0000256" key="2">
    <source>
        <dbReference type="SAM" id="MobiDB-lite"/>
    </source>
</evidence>
<evidence type="ECO:0000269" key="3">
    <source>
    </source>
</evidence>
<evidence type="ECO:0000269" key="4">
    <source>
    </source>
</evidence>
<evidence type="ECO:0000303" key="5">
    <source>
    </source>
</evidence>
<evidence type="ECO:0000305" key="6"/>
<evidence type="ECO:0000312" key="7">
    <source>
        <dbReference type="Araport" id="AT1G56060"/>
    </source>
</evidence>
<evidence type="ECO:0000312" key="8">
    <source>
        <dbReference type="EMBL" id="ANM58233.1"/>
    </source>
</evidence>
<accession>A0A178WF56</accession>
<accession>A0A1P8ANL9</accession>
<gene>
    <name evidence="5" type="primary">CYSTM3</name>
    <name evidence="7" type="ordered locus">At1g56060</name>
    <name evidence="8" type="ORF">T6H22.17</name>
</gene>
<name>CSTM3_ARATH</name>
<comment type="function">
    <text evidence="3 4 5">Negatively regulates salt stress responses and Na(+) homeostasis (PubMed:29272523, PubMed:30701352). Prevents Na(+) efflux, disturbs reactive oxygen species (ROS) homeostasis, and represses the expression of nuclear salt stress-responsive genes (PubMed:30701352). Involved in resistance to abiotic stress (PubMed:29272523).</text>
</comment>
<comment type="subunit">
    <text evidence="3">Heterodimers (PubMed:29272523). Interacts with CYSTM7 and WIH1/CYSTM13 (PubMed:29272523).</text>
</comment>
<comment type="subcellular location">
    <subcellularLocation>
        <location evidence="3">Cell membrane</location>
        <topology evidence="1">Single-pass membrane protein</topology>
    </subcellularLocation>
    <subcellularLocation>
        <location evidence="3">Cytoplasm</location>
    </subcellularLocation>
    <subcellularLocation>
        <location evidence="4">Mitochondrion</location>
    </subcellularLocation>
</comment>
<comment type="tissue specificity">
    <text evidence="3 4">Mostly expressed in leaves and flowers and, to a lower extent, in stems, siliques, shoots and roots.</text>
</comment>
<comment type="induction">
    <text evidence="3 4">Induced by salt, cold and drought.</text>
</comment>
<comment type="disruption phenotype">
    <text evidence="4">Increased tolerance to high salinity with reduced reactive oxygen species (ROS) levels and associated with an over-activation of nuclear salt stress-responsive genes.</text>
</comment>
<comment type="similarity">
    <text evidence="6">Belongs to the CYSTM1 family.</text>
</comment>
<proteinExistence type="evidence at protein level"/>
<protein>
    <recommendedName>
        <fullName evidence="5">Protein CYSTEINE-RICH TRANSMEMBRANE MODULE 3</fullName>
        <shortName evidence="5">AthCYSTM3</shortName>
    </recommendedName>
</protein>
<sequence length="71" mass="7812">MAQYHQQHEMKQTMAETQYVTAPPPMGYPVMMKDSPQTVQPPHEGQSKGSGGFLRGCLAAMCCCCVLDCVF</sequence>
<reference key="1">
    <citation type="journal article" date="2000" name="Nature">
        <title>Sequence and analysis of chromosome 1 of the plant Arabidopsis thaliana.</title>
        <authorList>
            <person name="Theologis A."/>
            <person name="Ecker J.R."/>
            <person name="Palm C.J."/>
            <person name="Federspiel N.A."/>
            <person name="Kaul S."/>
            <person name="White O."/>
            <person name="Alonso J."/>
            <person name="Altafi H."/>
            <person name="Araujo R."/>
            <person name="Bowman C.L."/>
            <person name="Brooks S.Y."/>
            <person name="Buehler E."/>
            <person name="Chan A."/>
            <person name="Chao Q."/>
            <person name="Chen H."/>
            <person name="Cheuk R.F."/>
            <person name="Chin C.W."/>
            <person name="Chung M.K."/>
            <person name="Conn L."/>
            <person name="Conway A.B."/>
            <person name="Conway A.R."/>
            <person name="Creasy T.H."/>
            <person name="Dewar K."/>
            <person name="Dunn P."/>
            <person name="Etgu P."/>
            <person name="Feldblyum T.V."/>
            <person name="Feng J.-D."/>
            <person name="Fong B."/>
            <person name="Fujii C.Y."/>
            <person name="Gill J.E."/>
            <person name="Goldsmith A.D."/>
            <person name="Haas B."/>
            <person name="Hansen N.F."/>
            <person name="Hughes B."/>
            <person name="Huizar L."/>
            <person name="Hunter J.L."/>
            <person name="Jenkins J."/>
            <person name="Johnson-Hopson C."/>
            <person name="Khan S."/>
            <person name="Khaykin E."/>
            <person name="Kim C.J."/>
            <person name="Koo H.L."/>
            <person name="Kremenetskaia I."/>
            <person name="Kurtz D.B."/>
            <person name="Kwan A."/>
            <person name="Lam B."/>
            <person name="Langin-Hooper S."/>
            <person name="Lee A."/>
            <person name="Lee J.M."/>
            <person name="Lenz C.A."/>
            <person name="Li J.H."/>
            <person name="Li Y.-P."/>
            <person name="Lin X."/>
            <person name="Liu S.X."/>
            <person name="Liu Z.A."/>
            <person name="Luros J.S."/>
            <person name="Maiti R."/>
            <person name="Marziali A."/>
            <person name="Militscher J."/>
            <person name="Miranda M."/>
            <person name="Nguyen M."/>
            <person name="Nierman W.C."/>
            <person name="Osborne B.I."/>
            <person name="Pai G."/>
            <person name="Peterson J."/>
            <person name="Pham P.K."/>
            <person name="Rizzo M."/>
            <person name="Rooney T."/>
            <person name="Rowley D."/>
            <person name="Sakano H."/>
            <person name="Salzberg S.L."/>
            <person name="Schwartz J.R."/>
            <person name="Shinn P."/>
            <person name="Southwick A.M."/>
            <person name="Sun H."/>
            <person name="Tallon L.J."/>
            <person name="Tambunga G."/>
            <person name="Toriumi M.J."/>
            <person name="Town C.D."/>
            <person name="Utterback T."/>
            <person name="Van Aken S."/>
            <person name="Vaysberg M."/>
            <person name="Vysotskaia V.S."/>
            <person name="Walker M."/>
            <person name="Wu D."/>
            <person name="Yu G."/>
            <person name="Fraser C.M."/>
            <person name="Venter J.C."/>
            <person name="Davis R.W."/>
        </authorList>
    </citation>
    <scope>NUCLEOTIDE SEQUENCE [LARGE SCALE GENOMIC DNA]</scope>
    <source>
        <strain>cv. Columbia</strain>
    </source>
</reference>
<reference key="2">
    <citation type="journal article" date="2017" name="Plant J.">
        <title>Araport11: a complete reannotation of the Arabidopsis thaliana reference genome.</title>
        <authorList>
            <person name="Cheng C.Y."/>
            <person name="Krishnakumar V."/>
            <person name="Chan A.P."/>
            <person name="Thibaud-Nissen F."/>
            <person name="Schobel S."/>
            <person name="Town C.D."/>
        </authorList>
    </citation>
    <scope>GENOME REANNOTATION</scope>
    <source>
        <strain>cv. Columbia</strain>
    </source>
</reference>
<reference key="3">
    <citation type="journal article" date="2018" name="Plant Cell Physiol.">
        <title>CYSTM, a novel non-secreted cysteine-rich peptide family, involved in environmental stresses in Arabidopsis thaliana.</title>
        <authorList>
            <person name="Xu Y."/>
            <person name="Yu Z."/>
            <person name="Zhang D."/>
            <person name="Huang J."/>
            <person name="Wu C."/>
            <person name="Yang G."/>
            <person name="Yan K."/>
            <person name="Zhang S."/>
            <person name="Zheng C."/>
        </authorList>
    </citation>
    <scope>FUNCTION</scope>
    <scope>INTERACTION WITH CYSTM7 AND WIH1/CYSTM13</scope>
    <scope>TISSUE SPECIFICITY</scope>
    <scope>INDUCTION BY SALT; COLD AND DROUGHT</scope>
    <scope>SUBCELLULAR LOCATION</scope>
    <source>
        <strain>cv. Columbia</strain>
    </source>
</reference>
<reference key="4">
    <citation type="journal article" date="2019" name="Plant Mol. Biol.">
        <title>CYSTM3 negatively regulates salt stress tolerance in Arabidopsis.</title>
        <authorList>
            <person name="Xu Y."/>
            <person name="Yu Z."/>
            <person name="Zhang S."/>
            <person name="Wu C."/>
            <person name="Yang G."/>
            <person name="Yan K."/>
            <person name="Zheng C."/>
            <person name="Huang J."/>
        </authorList>
    </citation>
    <scope>FUNCTION</scope>
    <scope>DISRUPTION PHENOTYPE</scope>
    <scope>TISSUE SPECIFICITY</scope>
    <scope>INDUCTION BY SALT STRESS</scope>
    <scope>SUBCELLULAR LOCATION</scope>
    <source>
        <strain>cv. Columbia</strain>
    </source>
</reference>
<feature type="chain" id="PRO_0000454800" description="Protein CYSTEINE-RICH TRANSMEMBRANE MODULE 3">
    <location>
        <begin position="1"/>
        <end position="71"/>
    </location>
</feature>
<feature type="transmembrane region" description="Helical" evidence="1">
    <location>
        <begin position="48"/>
        <end position="64"/>
    </location>
</feature>
<feature type="region of interest" description="Disordered" evidence="2">
    <location>
        <begin position="30"/>
        <end position="49"/>
    </location>
</feature>